<accession>Q3K0E2</accession>
<gene>
    <name evidence="1" type="primary">rplU</name>
    <name type="ordered locus">SAK_1403</name>
</gene>
<dbReference type="EMBL" id="CP000114">
    <property type="protein sequence ID" value="ABA45698.1"/>
    <property type="molecule type" value="Genomic_DNA"/>
</dbReference>
<dbReference type="RefSeq" id="WP_000109135.1">
    <property type="nucleotide sequence ID" value="NC_007432.1"/>
</dbReference>
<dbReference type="SMR" id="Q3K0E2"/>
<dbReference type="GeneID" id="66886236"/>
<dbReference type="KEGG" id="sak:SAK_1403"/>
<dbReference type="HOGENOM" id="CLU_061463_3_1_9"/>
<dbReference type="GO" id="GO:0005737">
    <property type="term" value="C:cytoplasm"/>
    <property type="evidence" value="ECO:0007669"/>
    <property type="project" value="UniProtKB-ARBA"/>
</dbReference>
<dbReference type="GO" id="GO:1990904">
    <property type="term" value="C:ribonucleoprotein complex"/>
    <property type="evidence" value="ECO:0007669"/>
    <property type="project" value="UniProtKB-KW"/>
</dbReference>
<dbReference type="GO" id="GO:0005840">
    <property type="term" value="C:ribosome"/>
    <property type="evidence" value="ECO:0007669"/>
    <property type="project" value="UniProtKB-KW"/>
</dbReference>
<dbReference type="GO" id="GO:0019843">
    <property type="term" value="F:rRNA binding"/>
    <property type="evidence" value="ECO:0007669"/>
    <property type="project" value="UniProtKB-UniRule"/>
</dbReference>
<dbReference type="GO" id="GO:0003735">
    <property type="term" value="F:structural constituent of ribosome"/>
    <property type="evidence" value="ECO:0007669"/>
    <property type="project" value="InterPro"/>
</dbReference>
<dbReference type="GO" id="GO:0006412">
    <property type="term" value="P:translation"/>
    <property type="evidence" value="ECO:0007669"/>
    <property type="project" value="UniProtKB-UniRule"/>
</dbReference>
<dbReference type="HAMAP" id="MF_01363">
    <property type="entry name" value="Ribosomal_bL21"/>
    <property type="match status" value="1"/>
</dbReference>
<dbReference type="InterPro" id="IPR028909">
    <property type="entry name" value="bL21-like"/>
</dbReference>
<dbReference type="InterPro" id="IPR036164">
    <property type="entry name" value="bL21-like_sf"/>
</dbReference>
<dbReference type="InterPro" id="IPR001787">
    <property type="entry name" value="Ribosomal_bL21"/>
</dbReference>
<dbReference type="InterPro" id="IPR018258">
    <property type="entry name" value="Ribosomal_bL21_CS"/>
</dbReference>
<dbReference type="NCBIfam" id="TIGR00061">
    <property type="entry name" value="L21"/>
    <property type="match status" value="1"/>
</dbReference>
<dbReference type="PANTHER" id="PTHR21349">
    <property type="entry name" value="50S RIBOSOMAL PROTEIN L21"/>
    <property type="match status" value="1"/>
</dbReference>
<dbReference type="PANTHER" id="PTHR21349:SF0">
    <property type="entry name" value="LARGE RIBOSOMAL SUBUNIT PROTEIN BL21M"/>
    <property type="match status" value="1"/>
</dbReference>
<dbReference type="Pfam" id="PF00829">
    <property type="entry name" value="Ribosomal_L21p"/>
    <property type="match status" value="1"/>
</dbReference>
<dbReference type="SUPFAM" id="SSF141091">
    <property type="entry name" value="L21p-like"/>
    <property type="match status" value="1"/>
</dbReference>
<dbReference type="PROSITE" id="PS01169">
    <property type="entry name" value="RIBOSOMAL_L21"/>
    <property type="match status" value="1"/>
</dbReference>
<protein>
    <recommendedName>
        <fullName evidence="1">Large ribosomal subunit protein bL21</fullName>
    </recommendedName>
    <alternativeName>
        <fullName evidence="2">50S ribosomal protein L21</fullName>
    </alternativeName>
</protein>
<keyword id="KW-0687">Ribonucleoprotein</keyword>
<keyword id="KW-0689">Ribosomal protein</keyword>
<keyword id="KW-0694">RNA-binding</keyword>
<keyword id="KW-0699">rRNA-binding</keyword>
<organism>
    <name type="scientific">Streptococcus agalactiae serotype Ia (strain ATCC 27591 / A909 / CDC SS700)</name>
    <dbReference type="NCBI Taxonomy" id="205921"/>
    <lineage>
        <taxon>Bacteria</taxon>
        <taxon>Bacillati</taxon>
        <taxon>Bacillota</taxon>
        <taxon>Bacilli</taxon>
        <taxon>Lactobacillales</taxon>
        <taxon>Streptococcaceae</taxon>
        <taxon>Streptococcus</taxon>
    </lineage>
</organism>
<sequence>MSTYAIIKTGGKQVKVEVGQAIYVEKLDVEAGAEVTFNEVVLVGGETTKVGTPVVEGATVVGTVEKQGKQKKVVSYKYKPKKGSHRKQGHRQPYTKVVINAINA</sequence>
<evidence type="ECO:0000255" key="1">
    <source>
        <dbReference type="HAMAP-Rule" id="MF_01363"/>
    </source>
</evidence>
<evidence type="ECO:0000305" key="2"/>
<reference key="1">
    <citation type="journal article" date="2005" name="Proc. Natl. Acad. Sci. U.S.A.">
        <title>Genome analysis of multiple pathogenic isolates of Streptococcus agalactiae: implications for the microbial 'pan-genome'.</title>
        <authorList>
            <person name="Tettelin H."/>
            <person name="Masignani V."/>
            <person name="Cieslewicz M.J."/>
            <person name="Donati C."/>
            <person name="Medini D."/>
            <person name="Ward N.L."/>
            <person name="Angiuoli S.V."/>
            <person name="Crabtree J."/>
            <person name="Jones A.L."/>
            <person name="Durkin A.S."/>
            <person name="DeBoy R.T."/>
            <person name="Davidsen T.M."/>
            <person name="Mora M."/>
            <person name="Scarselli M."/>
            <person name="Margarit y Ros I."/>
            <person name="Peterson J.D."/>
            <person name="Hauser C.R."/>
            <person name="Sundaram J.P."/>
            <person name="Nelson W.C."/>
            <person name="Madupu R."/>
            <person name="Brinkac L.M."/>
            <person name="Dodson R.J."/>
            <person name="Rosovitz M.J."/>
            <person name="Sullivan S.A."/>
            <person name="Daugherty S.C."/>
            <person name="Haft D.H."/>
            <person name="Selengut J."/>
            <person name="Gwinn M.L."/>
            <person name="Zhou L."/>
            <person name="Zafar N."/>
            <person name="Khouri H."/>
            <person name="Radune D."/>
            <person name="Dimitrov G."/>
            <person name="Watkins K."/>
            <person name="O'Connor K.J."/>
            <person name="Smith S."/>
            <person name="Utterback T.R."/>
            <person name="White O."/>
            <person name="Rubens C.E."/>
            <person name="Grandi G."/>
            <person name="Madoff L.C."/>
            <person name="Kasper D.L."/>
            <person name="Telford J.L."/>
            <person name="Wessels M.R."/>
            <person name="Rappuoli R."/>
            <person name="Fraser C.M."/>
        </authorList>
    </citation>
    <scope>NUCLEOTIDE SEQUENCE [LARGE SCALE GENOMIC DNA]</scope>
    <source>
        <strain>ATCC 27591 / A909 / CDC SS700</strain>
    </source>
</reference>
<name>RL21_STRA1</name>
<feature type="chain" id="PRO_0000269387" description="Large ribosomal subunit protein bL21">
    <location>
        <begin position="1"/>
        <end position="104"/>
    </location>
</feature>
<comment type="function">
    <text evidence="1">This protein binds to 23S rRNA in the presence of protein L20.</text>
</comment>
<comment type="subunit">
    <text evidence="1">Part of the 50S ribosomal subunit. Contacts protein L20.</text>
</comment>
<comment type="similarity">
    <text evidence="1">Belongs to the bacterial ribosomal protein bL21 family.</text>
</comment>
<proteinExistence type="inferred from homology"/>